<reference key="1">
    <citation type="submission" date="2007-09" db="EMBL/GenBank/DDBJ databases">
        <title>Complete sequence of chromosome of Serratia proteamaculans 568.</title>
        <authorList>
            <consortium name="US DOE Joint Genome Institute"/>
            <person name="Copeland A."/>
            <person name="Lucas S."/>
            <person name="Lapidus A."/>
            <person name="Barry K."/>
            <person name="Glavina del Rio T."/>
            <person name="Dalin E."/>
            <person name="Tice H."/>
            <person name="Pitluck S."/>
            <person name="Chain P."/>
            <person name="Malfatti S."/>
            <person name="Shin M."/>
            <person name="Vergez L."/>
            <person name="Schmutz J."/>
            <person name="Larimer F."/>
            <person name="Land M."/>
            <person name="Hauser L."/>
            <person name="Kyrpides N."/>
            <person name="Kim E."/>
            <person name="Taghavi S."/>
            <person name="Newman L."/>
            <person name="Vangronsveld J."/>
            <person name="van der Lelie D."/>
            <person name="Richardson P."/>
        </authorList>
    </citation>
    <scope>NUCLEOTIDE SEQUENCE [LARGE SCALE GENOMIC DNA]</scope>
    <source>
        <strain>568</strain>
    </source>
</reference>
<comment type="subunit">
    <text evidence="1">Part of the 50S ribosomal subunit. Contacts protein L32.</text>
</comment>
<comment type="similarity">
    <text evidence="1">Belongs to the bacterial ribosomal protein bL17 family.</text>
</comment>
<protein>
    <recommendedName>
        <fullName evidence="1">Large ribosomal subunit protein bL17</fullName>
    </recommendedName>
    <alternativeName>
        <fullName evidence="2">50S ribosomal protein L17</fullName>
    </alternativeName>
</protein>
<evidence type="ECO:0000255" key="1">
    <source>
        <dbReference type="HAMAP-Rule" id="MF_01368"/>
    </source>
</evidence>
<evidence type="ECO:0000305" key="2"/>
<name>RL17_SERP5</name>
<sequence length="129" mass="14565">MRHRKSGRQLNRNSSHRQAMFRNMAGSLVRHEIIKTTLPKAKELRRVVEPLITLAKTDSVANRRLAFARTRDNEIVAKLFNELGPRFASRAGGYTRILKCGFRAGDNAPMAYIELVDRAESQAEVATAE</sequence>
<dbReference type="EMBL" id="CP000826">
    <property type="protein sequence ID" value="ABV43612.1"/>
    <property type="molecule type" value="Genomic_DNA"/>
</dbReference>
<dbReference type="SMR" id="A8GKH2"/>
<dbReference type="STRING" id="399741.Spro_4518"/>
<dbReference type="KEGG" id="spe:Spro_4518"/>
<dbReference type="eggNOG" id="COG0203">
    <property type="taxonomic scope" value="Bacteria"/>
</dbReference>
<dbReference type="HOGENOM" id="CLU_074407_2_0_6"/>
<dbReference type="OrthoDB" id="9809073at2"/>
<dbReference type="GO" id="GO:0022625">
    <property type="term" value="C:cytosolic large ribosomal subunit"/>
    <property type="evidence" value="ECO:0007669"/>
    <property type="project" value="TreeGrafter"/>
</dbReference>
<dbReference type="GO" id="GO:0003735">
    <property type="term" value="F:structural constituent of ribosome"/>
    <property type="evidence" value="ECO:0007669"/>
    <property type="project" value="InterPro"/>
</dbReference>
<dbReference type="GO" id="GO:0006412">
    <property type="term" value="P:translation"/>
    <property type="evidence" value="ECO:0007669"/>
    <property type="project" value="UniProtKB-UniRule"/>
</dbReference>
<dbReference type="FunFam" id="3.90.1030.10:FF:000001">
    <property type="entry name" value="50S ribosomal protein L17"/>
    <property type="match status" value="1"/>
</dbReference>
<dbReference type="Gene3D" id="3.90.1030.10">
    <property type="entry name" value="Ribosomal protein L17"/>
    <property type="match status" value="1"/>
</dbReference>
<dbReference type="HAMAP" id="MF_01368">
    <property type="entry name" value="Ribosomal_bL17"/>
    <property type="match status" value="1"/>
</dbReference>
<dbReference type="InterPro" id="IPR000456">
    <property type="entry name" value="Ribosomal_bL17"/>
</dbReference>
<dbReference type="InterPro" id="IPR047859">
    <property type="entry name" value="Ribosomal_bL17_CS"/>
</dbReference>
<dbReference type="InterPro" id="IPR036373">
    <property type="entry name" value="Ribosomal_bL17_sf"/>
</dbReference>
<dbReference type="NCBIfam" id="TIGR00059">
    <property type="entry name" value="L17"/>
    <property type="match status" value="1"/>
</dbReference>
<dbReference type="PANTHER" id="PTHR14413:SF16">
    <property type="entry name" value="LARGE RIBOSOMAL SUBUNIT PROTEIN BL17M"/>
    <property type="match status" value="1"/>
</dbReference>
<dbReference type="PANTHER" id="PTHR14413">
    <property type="entry name" value="RIBOSOMAL PROTEIN L17"/>
    <property type="match status" value="1"/>
</dbReference>
<dbReference type="Pfam" id="PF01196">
    <property type="entry name" value="Ribosomal_L17"/>
    <property type="match status" value="1"/>
</dbReference>
<dbReference type="SUPFAM" id="SSF64263">
    <property type="entry name" value="Prokaryotic ribosomal protein L17"/>
    <property type="match status" value="1"/>
</dbReference>
<dbReference type="PROSITE" id="PS01167">
    <property type="entry name" value="RIBOSOMAL_L17"/>
    <property type="match status" value="1"/>
</dbReference>
<organism>
    <name type="scientific">Serratia proteamaculans (strain 568)</name>
    <dbReference type="NCBI Taxonomy" id="399741"/>
    <lineage>
        <taxon>Bacteria</taxon>
        <taxon>Pseudomonadati</taxon>
        <taxon>Pseudomonadota</taxon>
        <taxon>Gammaproteobacteria</taxon>
        <taxon>Enterobacterales</taxon>
        <taxon>Yersiniaceae</taxon>
        <taxon>Serratia</taxon>
    </lineage>
</organism>
<proteinExistence type="inferred from homology"/>
<keyword id="KW-0687">Ribonucleoprotein</keyword>
<keyword id="KW-0689">Ribosomal protein</keyword>
<feature type="chain" id="PRO_1000068027" description="Large ribosomal subunit protein bL17">
    <location>
        <begin position="1"/>
        <end position="129"/>
    </location>
</feature>
<accession>A8GKH2</accession>
<gene>
    <name evidence="1" type="primary">rplQ</name>
    <name type="ordered locus">Spro_4518</name>
</gene>